<dbReference type="EMBL" id="AF007545">
    <property type="protein sequence ID" value="AAB64221.1"/>
    <property type="molecule type" value="mRNA"/>
</dbReference>
<dbReference type="EMBL" id="U73529">
    <property type="protein sequence ID" value="AAB61456.1"/>
    <property type="molecule type" value="mRNA"/>
</dbReference>
<dbReference type="EMBL" id="U73531">
    <property type="protein sequence ID" value="AAB61457.1"/>
    <property type="molecule type" value="mRNA"/>
</dbReference>
<dbReference type="EMBL" id="Y13248">
    <property type="protein sequence ID" value="CAA73698.1"/>
    <property type="molecule type" value="mRNA"/>
</dbReference>
<dbReference type="EMBL" id="AF029759">
    <property type="protein sequence ID" value="AAG21918.1"/>
    <property type="molecule type" value="Genomic_DNA"/>
</dbReference>
<dbReference type="EMBL" id="AY322543">
    <property type="protein sequence ID" value="AAP84356.1"/>
    <property type="molecule type" value="Genomic_DNA"/>
</dbReference>
<dbReference type="EMBL" id="BC033584">
    <property type="protein sequence ID" value="AAH33584.1"/>
    <property type="molecule type" value="mRNA"/>
</dbReference>
<dbReference type="CCDS" id="CCDS2735.1"/>
<dbReference type="RefSeq" id="NP_001373364.1">
    <property type="nucleotide sequence ID" value="NM_001386435.1"/>
</dbReference>
<dbReference type="RefSeq" id="NP_001373365.1">
    <property type="nucleotide sequence ID" value="NM_001386436.1"/>
</dbReference>
<dbReference type="RefSeq" id="NP_001373366.1">
    <property type="nucleotide sequence ID" value="NM_001386437.1"/>
</dbReference>
<dbReference type="RefSeq" id="NP_006555.1">
    <property type="nucleotide sequence ID" value="NM_006564.2"/>
</dbReference>
<dbReference type="RefSeq" id="XP_005264866.1">
    <property type="nucleotide sequence ID" value="XM_005264809.2"/>
</dbReference>
<dbReference type="RefSeq" id="XP_011531592.1">
    <property type="nucleotide sequence ID" value="XM_011533290.2"/>
</dbReference>
<dbReference type="RefSeq" id="XP_011531593.1">
    <property type="nucleotide sequence ID" value="XM_011533291.2"/>
</dbReference>
<dbReference type="SMR" id="O00574"/>
<dbReference type="FunCoup" id="O00574">
    <property type="interactions" value="905"/>
</dbReference>
<dbReference type="STRING" id="9606.ENSP00000395704"/>
<dbReference type="BindingDB" id="O00574"/>
<dbReference type="ChEMBL" id="CHEMBL5994"/>
<dbReference type="GuidetoPHARMACOLOGY" id="73"/>
<dbReference type="GlyCosmos" id="O00574">
    <property type="glycosylation" value="1 site, No reported glycans"/>
</dbReference>
<dbReference type="GlyGen" id="O00574">
    <property type="glycosylation" value="1 site"/>
</dbReference>
<dbReference type="iPTMnet" id="O00574"/>
<dbReference type="PhosphoSitePlus" id="O00574"/>
<dbReference type="BioMuta" id="CXCR6"/>
<dbReference type="MassIVE" id="O00574"/>
<dbReference type="PaxDb" id="9606-ENSP00000395704"/>
<dbReference type="PeptideAtlas" id="O00574"/>
<dbReference type="Antibodypedia" id="12723">
    <property type="antibodies" value="724 antibodies from 42 providers"/>
</dbReference>
<dbReference type="DNASU" id="10663"/>
<dbReference type="Ensembl" id="ENST00000304552.5">
    <property type="protein sequence ID" value="ENSP00000304414.4"/>
    <property type="gene ID" value="ENSG00000172215.6"/>
</dbReference>
<dbReference type="Ensembl" id="ENST00000438735.1">
    <property type="protein sequence ID" value="ENSP00000396218.1"/>
    <property type="gene ID" value="ENSG00000172215.6"/>
</dbReference>
<dbReference type="Ensembl" id="ENST00000457814.1">
    <property type="protein sequence ID" value="ENSP00000396886.1"/>
    <property type="gene ID" value="ENSG00000172215.6"/>
</dbReference>
<dbReference type="Ensembl" id="ENST00000458629.1">
    <property type="protein sequence ID" value="ENSP00000395704.1"/>
    <property type="gene ID" value="ENSG00000172215.6"/>
</dbReference>
<dbReference type="GeneID" id="10663"/>
<dbReference type="KEGG" id="hsa:10663"/>
<dbReference type="MANE-Select" id="ENST00000304552.5">
    <property type="protein sequence ID" value="ENSP00000304414.4"/>
    <property type="RefSeq nucleotide sequence ID" value="NM_006564.2"/>
    <property type="RefSeq protein sequence ID" value="NP_006555.1"/>
</dbReference>
<dbReference type="UCSC" id="uc003cpc.2">
    <property type="organism name" value="human"/>
</dbReference>
<dbReference type="AGR" id="HGNC:16647"/>
<dbReference type="CTD" id="10663"/>
<dbReference type="DisGeNET" id="10663"/>
<dbReference type="GeneCards" id="CXCR6"/>
<dbReference type="HGNC" id="HGNC:16647">
    <property type="gene designation" value="CXCR6"/>
</dbReference>
<dbReference type="HPA" id="ENSG00000172215">
    <property type="expression patterns" value="Tissue enhanced (lymphoid)"/>
</dbReference>
<dbReference type="MIM" id="605163">
    <property type="type" value="gene"/>
</dbReference>
<dbReference type="neXtProt" id="NX_O00574"/>
<dbReference type="OpenTargets" id="ENSG00000172215"/>
<dbReference type="PharmGKB" id="PA38409"/>
<dbReference type="VEuPathDB" id="HostDB:ENSG00000172215"/>
<dbReference type="eggNOG" id="ENOG502QSJQ">
    <property type="taxonomic scope" value="Eukaryota"/>
</dbReference>
<dbReference type="GeneTree" id="ENSGT01030000234667"/>
<dbReference type="HOGENOM" id="CLU_009579_8_3_1"/>
<dbReference type="InParanoid" id="O00574"/>
<dbReference type="OMA" id="YASIHEW"/>
<dbReference type="OrthoDB" id="5970631at2759"/>
<dbReference type="PAN-GO" id="O00574">
    <property type="GO annotations" value="7 GO annotations based on evolutionary models"/>
</dbReference>
<dbReference type="PhylomeDB" id="O00574"/>
<dbReference type="TreeFam" id="TF330966"/>
<dbReference type="PathwayCommons" id="O00574"/>
<dbReference type="Reactome" id="R-HSA-380108">
    <property type="pathway name" value="Chemokine receptors bind chemokines"/>
</dbReference>
<dbReference type="Reactome" id="R-HSA-418594">
    <property type="pathway name" value="G alpha (i) signalling events"/>
</dbReference>
<dbReference type="SignaLink" id="O00574"/>
<dbReference type="SIGNOR" id="O00574"/>
<dbReference type="BioGRID-ORCS" id="10663">
    <property type="hits" value="11 hits in 1145 CRISPR screens"/>
</dbReference>
<dbReference type="ChiTaRS" id="CXCR6">
    <property type="organism name" value="human"/>
</dbReference>
<dbReference type="GeneWiki" id="CXCR6"/>
<dbReference type="GenomeRNAi" id="10663"/>
<dbReference type="Pharos" id="O00574">
    <property type="development level" value="Tchem"/>
</dbReference>
<dbReference type="PRO" id="PR:O00574"/>
<dbReference type="Proteomes" id="UP000005640">
    <property type="component" value="Chromosome 3"/>
</dbReference>
<dbReference type="RNAct" id="O00574">
    <property type="molecule type" value="protein"/>
</dbReference>
<dbReference type="Bgee" id="ENSG00000172215">
    <property type="expression patterns" value="Expressed in spleen and 116 other cell types or tissues"/>
</dbReference>
<dbReference type="ExpressionAtlas" id="O00574">
    <property type="expression patterns" value="baseline and differential"/>
</dbReference>
<dbReference type="GO" id="GO:0009897">
    <property type="term" value="C:external side of plasma membrane"/>
    <property type="evidence" value="ECO:0000318"/>
    <property type="project" value="GO_Central"/>
</dbReference>
<dbReference type="GO" id="GO:0005886">
    <property type="term" value="C:plasma membrane"/>
    <property type="evidence" value="ECO:0000304"/>
    <property type="project" value="Reactome"/>
</dbReference>
<dbReference type="GO" id="GO:0019957">
    <property type="term" value="F:C-C chemokine binding"/>
    <property type="evidence" value="ECO:0000318"/>
    <property type="project" value="GO_Central"/>
</dbReference>
<dbReference type="GO" id="GO:0016493">
    <property type="term" value="F:C-C chemokine receptor activity"/>
    <property type="evidence" value="ECO:0000318"/>
    <property type="project" value="GO_Central"/>
</dbReference>
<dbReference type="GO" id="GO:0016494">
    <property type="term" value="F:C-X-C chemokine receptor activity"/>
    <property type="evidence" value="ECO:0007669"/>
    <property type="project" value="InterPro"/>
</dbReference>
<dbReference type="GO" id="GO:0015026">
    <property type="term" value="F:coreceptor activity"/>
    <property type="evidence" value="ECO:0000304"/>
    <property type="project" value="ProtInc"/>
</dbReference>
<dbReference type="GO" id="GO:0004930">
    <property type="term" value="F:G protein-coupled receptor activity"/>
    <property type="evidence" value="ECO:0000304"/>
    <property type="project" value="ProtInc"/>
</dbReference>
<dbReference type="GO" id="GO:0019722">
    <property type="term" value="P:calcium-mediated signaling"/>
    <property type="evidence" value="ECO:0000318"/>
    <property type="project" value="GO_Central"/>
</dbReference>
<dbReference type="GO" id="GO:0060326">
    <property type="term" value="P:cell chemotaxis"/>
    <property type="evidence" value="ECO:0000318"/>
    <property type="project" value="GO_Central"/>
</dbReference>
<dbReference type="GO" id="GO:0007186">
    <property type="term" value="P:G protein-coupled receptor signaling pathway"/>
    <property type="evidence" value="ECO:0000304"/>
    <property type="project" value="ProtInc"/>
</dbReference>
<dbReference type="GO" id="GO:0006955">
    <property type="term" value="P:immune response"/>
    <property type="evidence" value="ECO:0000318"/>
    <property type="project" value="GO_Central"/>
</dbReference>
<dbReference type="GO" id="GO:0006954">
    <property type="term" value="P:inflammatory response"/>
    <property type="evidence" value="ECO:0007669"/>
    <property type="project" value="InterPro"/>
</dbReference>
<dbReference type="GO" id="GO:0007204">
    <property type="term" value="P:positive regulation of cytosolic calcium ion concentration"/>
    <property type="evidence" value="ECO:0000318"/>
    <property type="project" value="GO_Central"/>
</dbReference>
<dbReference type="GO" id="GO:0019079">
    <property type="term" value="P:viral genome replication"/>
    <property type="evidence" value="ECO:0000304"/>
    <property type="project" value="ProtInc"/>
</dbReference>
<dbReference type="CDD" id="cd15173">
    <property type="entry name" value="7tmA_CXCR6"/>
    <property type="match status" value="1"/>
</dbReference>
<dbReference type="FunFam" id="1.20.1070.10:FF:000035">
    <property type="entry name" value="C-C chemokine receptor type 6"/>
    <property type="match status" value="1"/>
</dbReference>
<dbReference type="Gene3D" id="1.20.1070.10">
    <property type="entry name" value="Rhodopsin 7-helix transmembrane proteins"/>
    <property type="match status" value="1"/>
</dbReference>
<dbReference type="InterPro" id="IPR050119">
    <property type="entry name" value="CCR1-9-like"/>
</dbReference>
<dbReference type="InterPro" id="IPR002235">
    <property type="entry name" value="Chemokine_CXCR6"/>
</dbReference>
<dbReference type="InterPro" id="IPR000355">
    <property type="entry name" value="Chemokine_rcpt"/>
</dbReference>
<dbReference type="InterPro" id="IPR000276">
    <property type="entry name" value="GPCR_Rhodpsn"/>
</dbReference>
<dbReference type="InterPro" id="IPR017452">
    <property type="entry name" value="GPCR_Rhodpsn_7TM"/>
</dbReference>
<dbReference type="PANTHER" id="PTHR10489:SF705">
    <property type="entry name" value="C-X-C CHEMOKINE RECEPTOR TYPE 6"/>
    <property type="match status" value="1"/>
</dbReference>
<dbReference type="PANTHER" id="PTHR10489">
    <property type="entry name" value="CELL ADHESION MOLECULE"/>
    <property type="match status" value="1"/>
</dbReference>
<dbReference type="Pfam" id="PF00001">
    <property type="entry name" value="7tm_1"/>
    <property type="match status" value="1"/>
</dbReference>
<dbReference type="PRINTS" id="PR00657">
    <property type="entry name" value="CCCHEMOKINER"/>
</dbReference>
<dbReference type="PRINTS" id="PR01105">
    <property type="entry name" value="CXCCHMKINER6"/>
</dbReference>
<dbReference type="PRINTS" id="PR00237">
    <property type="entry name" value="GPCRRHODOPSN"/>
</dbReference>
<dbReference type="SUPFAM" id="SSF81321">
    <property type="entry name" value="Family A G protein-coupled receptor-like"/>
    <property type="match status" value="1"/>
</dbReference>
<dbReference type="PROSITE" id="PS00237">
    <property type="entry name" value="G_PROTEIN_RECEP_F1_1"/>
    <property type="match status" value="1"/>
</dbReference>
<dbReference type="PROSITE" id="PS50262">
    <property type="entry name" value="G_PROTEIN_RECEP_F1_2"/>
    <property type="match status" value="1"/>
</dbReference>
<keyword id="KW-1003">Cell membrane</keyword>
<keyword id="KW-1015">Disulfide bond</keyword>
<keyword id="KW-0297">G-protein coupled receptor</keyword>
<keyword id="KW-0325">Glycoprotein</keyword>
<keyword id="KW-0472">Membrane</keyword>
<keyword id="KW-1267">Proteomics identification</keyword>
<keyword id="KW-0675">Receptor</keyword>
<keyword id="KW-1185">Reference proteome</keyword>
<keyword id="KW-0807">Transducer</keyword>
<keyword id="KW-0812">Transmembrane</keyword>
<keyword id="KW-1133">Transmembrane helix</keyword>
<accession>O00574</accession>
<accession>O00575</accession>
<accession>Q9HCA5</accession>
<evidence type="ECO:0000255" key="1"/>
<evidence type="ECO:0000255" key="2">
    <source>
        <dbReference type="PROSITE-ProRule" id="PRU00521"/>
    </source>
</evidence>
<evidence type="ECO:0000269" key="3">
    <source>
    </source>
</evidence>
<evidence type="ECO:0000269" key="4">
    <source ref="4"/>
</evidence>
<name>CXCR6_HUMAN</name>
<reference key="1">
    <citation type="journal article" date="1997" name="Nature">
        <title>Expression cloning of new receptors used by simian and human immunodeficiency viruses.</title>
        <authorList>
            <person name="Deng H.K."/>
            <person name="Unutmaz D."/>
            <person name="Kewalramani V.N."/>
            <person name="Littman D.R."/>
        </authorList>
    </citation>
    <scope>NUCLEOTIDE SEQUENCE [MRNA]</scope>
</reference>
<reference key="2">
    <citation type="journal article" date="1997" name="J. Exp. Med.">
        <title>STRL33, A novel chemokine receptor-like protein, functions as a fusion cofactor for both macrophage-tropic and T cell line-tropic HIV-1.</title>
        <authorList>
            <person name="Liao F."/>
            <person name="Alkhatib G."/>
            <person name="Peden K.W.C."/>
            <person name="Sharma G."/>
            <person name="Berger E.A."/>
            <person name="Farber J.M."/>
        </authorList>
    </citation>
    <scope>NUCLEOTIDE SEQUENCE [MRNA]</scope>
    <scope>VARIANT ALA-25</scope>
</reference>
<reference key="3">
    <citation type="journal article" date="1997" name="Curr. Biol.">
        <title>TYMSTR, a putative chemokine receptor selectively expressed in activated T cells, exhibits HIV-1 coreceptor function.</title>
        <authorList>
            <person name="Loetscher M."/>
            <person name="Amara A."/>
            <person name="Oberlin E."/>
            <person name="Brass N."/>
            <person name="Legler D.F."/>
            <person name="Loetscher P."/>
            <person name="D'Apuzzo M."/>
            <person name="Meese E.U."/>
            <person name="Rousset D."/>
            <person name="Virelizier J.-L."/>
            <person name="Baggiolini M."/>
            <person name="Arenzana-Seisdedos F."/>
            <person name="Moser B."/>
        </authorList>
    </citation>
    <scope>NUCLEOTIDE SEQUENCE [MRNA]</scope>
    <source>
        <tissue>Blood</tissue>
    </source>
</reference>
<reference key="4">
    <citation type="submission" date="1997-10" db="EMBL/GenBank/DDBJ databases">
        <title>The influence of a STRL33 mutant on the course of HIV-1 infection.</title>
        <authorList>
            <person name="An P."/>
            <person name="Winkler C."/>
            <person name="O'Brien S.J."/>
        </authorList>
    </citation>
    <scope>NUCLEOTIDE SEQUENCE [GENOMIC DNA]</scope>
    <scope>VARIANT LYS-3</scope>
</reference>
<reference key="5">
    <citation type="submission" date="2003-06" db="EMBL/GenBank/DDBJ databases">
        <title>cDNA clones of human proteins involved in signal transduction sequenced by the Guthrie cDNA resource center (www.cdna.org).</title>
        <authorList>
            <person name="Kopatz S.A."/>
            <person name="Aronstam R.S."/>
            <person name="Sharma S.V."/>
        </authorList>
    </citation>
    <scope>NUCLEOTIDE SEQUENCE [LARGE SCALE MRNA]</scope>
</reference>
<reference key="6">
    <citation type="journal article" date="2004" name="Genome Res.">
        <title>The status, quality, and expansion of the NIH full-length cDNA project: the Mammalian Gene Collection (MGC).</title>
        <authorList>
            <consortium name="The MGC Project Team"/>
        </authorList>
    </citation>
    <scope>NUCLEOTIDE SEQUENCE [LARGE SCALE MRNA]</scope>
    <source>
        <tissue>Pancreas</tissue>
    </source>
</reference>
<sequence length="342" mass="39280">MAEHDYHEDYGFSSFNDSSQEEHQDFLQFSKVFLPCMYLVVFVCGLVGNSLVLVISIFYHKLQSLTDVFLVNLPLADLVFVCTLPFWAYAGIHEWVFGQVMCKSLLGIYTINFYTSMLILTCITVDRFIVVVKATKAYNQQAKRMTWGKVTSLLIWVISLLVSLPQIIYGNVFNLDKLICGYHDEAISTVVLATQMTLGFFLPLLTMIVCYSVIIKTLLHAGGFQKHRSLKIIFLVMAVFLLTQMPFNLMKFIRSTHWEYYAMTSFHYTIMVTEAIAYLRACLNPVLYAFVSLKFRKNFWKLVKDIGCLPYLGVSHQWKSSEDNSKTFSASHNVEATSMFQL</sequence>
<gene>
    <name type="primary">CXCR6</name>
    <name type="synonym">BONZO</name>
    <name type="synonym">STRL33</name>
    <name type="synonym">TYMSTR</name>
</gene>
<organism>
    <name type="scientific">Homo sapiens</name>
    <name type="common">Human</name>
    <dbReference type="NCBI Taxonomy" id="9606"/>
    <lineage>
        <taxon>Eukaryota</taxon>
        <taxon>Metazoa</taxon>
        <taxon>Chordata</taxon>
        <taxon>Craniata</taxon>
        <taxon>Vertebrata</taxon>
        <taxon>Euteleostomi</taxon>
        <taxon>Mammalia</taxon>
        <taxon>Eutheria</taxon>
        <taxon>Euarchontoglires</taxon>
        <taxon>Primates</taxon>
        <taxon>Haplorrhini</taxon>
        <taxon>Catarrhini</taxon>
        <taxon>Hominidae</taxon>
        <taxon>Homo</taxon>
    </lineage>
</organism>
<proteinExistence type="evidence at protein level"/>
<feature type="chain" id="PRO_0000069365" description="C-X-C chemokine receptor type 6">
    <location>
        <begin position="1"/>
        <end position="342"/>
    </location>
</feature>
<feature type="topological domain" description="Extracellular" evidence="1">
    <location>
        <begin position="1"/>
        <end position="32"/>
    </location>
</feature>
<feature type="transmembrane region" description="Helical; Name=1" evidence="1">
    <location>
        <begin position="33"/>
        <end position="59"/>
    </location>
</feature>
<feature type="topological domain" description="Cytoplasmic" evidence="1">
    <location>
        <begin position="60"/>
        <end position="68"/>
    </location>
</feature>
<feature type="transmembrane region" description="Helical; Name=2" evidence="1">
    <location>
        <begin position="69"/>
        <end position="89"/>
    </location>
</feature>
<feature type="topological domain" description="Extracellular" evidence="1">
    <location>
        <begin position="90"/>
        <end position="103"/>
    </location>
</feature>
<feature type="transmembrane region" description="Helical; Name=3" evidence="1">
    <location>
        <begin position="104"/>
        <end position="125"/>
    </location>
</feature>
<feature type="topological domain" description="Cytoplasmic" evidence="1">
    <location>
        <begin position="126"/>
        <end position="143"/>
    </location>
</feature>
<feature type="transmembrane region" description="Helical; Name=4" evidence="1">
    <location>
        <begin position="144"/>
        <end position="164"/>
    </location>
</feature>
<feature type="topological domain" description="Extracellular" evidence="1">
    <location>
        <begin position="165"/>
        <end position="187"/>
    </location>
</feature>
<feature type="transmembrane region" description="Helical; Name=5" evidence="1">
    <location>
        <begin position="188"/>
        <end position="215"/>
    </location>
</feature>
<feature type="topological domain" description="Cytoplasmic" evidence="1">
    <location>
        <begin position="216"/>
        <end position="231"/>
    </location>
</feature>
<feature type="transmembrane region" description="Helical; Name=6" evidence="1">
    <location>
        <begin position="232"/>
        <end position="259"/>
    </location>
</feature>
<feature type="topological domain" description="Extracellular" evidence="1">
    <location>
        <begin position="260"/>
        <end position="275"/>
    </location>
</feature>
<feature type="transmembrane region" description="Helical; Name=7" evidence="1">
    <location>
        <begin position="276"/>
        <end position="293"/>
    </location>
</feature>
<feature type="topological domain" description="Cytoplasmic" evidence="1">
    <location>
        <begin position="294"/>
        <end position="342"/>
    </location>
</feature>
<feature type="glycosylation site" description="N-linked (GlcNAc...) asparagine" evidence="1">
    <location>
        <position position="16"/>
    </location>
</feature>
<feature type="disulfide bond" evidence="2">
    <location>
        <begin position="102"/>
        <end position="180"/>
    </location>
</feature>
<feature type="sequence variant" id="VAR_024253" description="In dbSNP:rs2234355." evidence="4">
    <original>E</original>
    <variation>K</variation>
    <location>
        <position position="3"/>
    </location>
</feature>
<feature type="sequence variant" id="VAR_003506" description="In STRL33.3." evidence="3">
    <original>D</original>
    <variation>A</variation>
    <location>
        <position position="25"/>
    </location>
</feature>
<comment type="function">
    <text>Receptor for the C-X-C chemokine CXCL16. Used as a coreceptor by SIVs and by strains of HIV-2 and m-tropic HIV-1.</text>
</comment>
<comment type="subcellular location">
    <subcellularLocation>
        <location>Cell membrane</location>
        <topology>Multi-pass membrane protein</topology>
    </subcellularLocation>
</comment>
<comment type="tissue specificity">
    <text>Expressed in lymphoid tissues and activated T cells.</text>
</comment>
<comment type="similarity">
    <text evidence="2">Belongs to the G-protein coupled receptor 1 family.</text>
</comment>
<comment type="online information" name="Wikipedia">
    <link uri="https://en.wikipedia.org/wiki/CXC_chemokine_receptors"/>
    <text>CXC chemokine receptors entry</text>
</comment>
<protein>
    <recommendedName>
        <fullName>C-X-C chemokine receptor type 6</fullName>
        <shortName>CXC-R6</shortName>
        <shortName>CXCR-6</shortName>
    </recommendedName>
    <alternativeName>
        <fullName>CDw186</fullName>
    </alternativeName>
    <alternativeName>
        <fullName>G-protein coupled receptor STRL33</fullName>
    </alternativeName>
    <alternativeName>
        <fullName>G-protein coupled receptor bonzo</fullName>
    </alternativeName>
    <cdAntigenName>CD186</cdAntigenName>
</protein>